<name>KITH_CLOBJ</name>
<gene>
    <name evidence="1" type="primary">tdk</name>
    <name type="ordered locus">CLM_0179</name>
</gene>
<proteinExistence type="inferred from homology"/>
<organism>
    <name type="scientific">Clostridium botulinum (strain Kyoto / Type A2)</name>
    <dbReference type="NCBI Taxonomy" id="536232"/>
    <lineage>
        <taxon>Bacteria</taxon>
        <taxon>Bacillati</taxon>
        <taxon>Bacillota</taxon>
        <taxon>Clostridia</taxon>
        <taxon>Eubacteriales</taxon>
        <taxon>Clostridiaceae</taxon>
        <taxon>Clostridium</taxon>
    </lineage>
</organism>
<sequence length="191" mass="21432">MYGPKDHGWIEVVAGPMYSGKTEELIRRIRRAEIAKQKVQVFKPEIDNRYSKQDVVSHAGDKIQSVPVKSSKEILEKLLDDTDVIGIDEAQFFDDSLVEIVSKIANNNRRVICAGLDMDFKGEPFGPMPKLMAIAEFVDKIQAVCMVCNNPATRTQRLINGKPAKKSDPVVLIGAQESYEARCRKCHCVPR</sequence>
<comment type="catalytic activity">
    <reaction evidence="1">
        <text>thymidine + ATP = dTMP + ADP + H(+)</text>
        <dbReference type="Rhea" id="RHEA:19129"/>
        <dbReference type="ChEBI" id="CHEBI:15378"/>
        <dbReference type="ChEBI" id="CHEBI:17748"/>
        <dbReference type="ChEBI" id="CHEBI:30616"/>
        <dbReference type="ChEBI" id="CHEBI:63528"/>
        <dbReference type="ChEBI" id="CHEBI:456216"/>
        <dbReference type="EC" id="2.7.1.21"/>
    </reaction>
</comment>
<comment type="subunit">
    <text evidence="1">Homotetramer.</text>
</comment>
<comment type="subcellular location">
    <subcellularLocation>
        <location evidence="1">Cytoplasm</location>
    </subcellularLocation>
</comment>
<comment type="similarity">
    <text evidence="1">Belongs to the thymidine kinase family.</text>
</comment>
<protein>
    <recommendedName>
        <fullName evidence="1">Thymidine kinase</fullName>
        <ecNumber evidence="1">2.7.1.21</ecNumber>
    </recommendedName>
</protein>
<evidence type="ECO:0000255" key="1">
    <source>
        <dbReference type="HAMAP-Rule" id="MF_00124"/>
    </source>
</evidence>
<feature type="chain" id="PRO_1000122655" description="Thymidine kinase">
    <location>
        <begin position="1"/>
        <end position="191"/>
    </location>
</feature>
<feature type="active site" description="Proton acceptor" evidence="1">
    <location>
        <position position="89"/>
    </location>
</feature>
<feature type="binding site" evidence="1">
    <location>
        <begin position="15"/>
        <end position="22"/>
    </location>
    <ligand>
        <name>ATP</name>
        <dbReference type="ChEBI" id="CHEBI:30616"/>
    </ligand>
</feature>
<feature type="binding site" evidence="1">
    <location>
        <begin position="88"/>
        <end position="91"/>
    </location>
    <ligand>
        <name>ATP</name>
        <dbReference type="ChEBI" id="CHEBI:30616"/>
    </ligand>
</feature>
<feature type="binding site" evidence="1">
    <location>
        <position position="145"/>
    </location>
    <ligand>
        <name>Zn(2+)</name>
        <dbReference type="ChEBI" id="CHEBI:29105"/>
    </ligand>
</feature>
<feature type="binding site" evidence="1">
    <location>
        <position position="148"/>
    </location>
    <ligand>
        <name>Zn(2+)</name>
        <dbReference type="ChEBI" id="CHEBI:29105"/>
    </ligand>
</feature>
<feature type="binding site" evidence="1">
    <location>
        <position position="183"/>
    </location>
    <ligand>
        <name>Zn(2+)</name>
        <dbReference type="ChEBI" id="CHEBI:29105"/>
    </ligand>
</feature>
<feature type="binding site" evidence="1">
    <location>
        <position position="186"/>
    </location>
    <ligand>
        <name>Zn(2+)</name>
        <dbReference type="ChEBI" id="CHEBI:29105"/>
    </ligand>
</feature>
<reference key="1">
    <citation type="submission" date="2008-10" db="EMBL/GenBank/DDBJ databases">
        <title>Genome sequence of Clostridium botulinum A2 Kyoto.</title>
        <authorList>
            <person name="Shrivastava S."/>
            <person name="Brinkac L.M."/>
            <person name="Brown J.L."/>
            <person name="Bruce D."/>
            <person name="Detter C.C."/>
            <person name="Johnson E.A."/>
            <person name="Munk C.A."/>
            <person name="Smith L.A."/>
            <person name="Smith T.J."/>
            <person name="Sutton G."/>
            <person name="Brettin T.S."/>
        </authorList>
    </citation>
    <scope>NUCLEOTIDE SEQUENCE [LARGE SCALE GENOMIC DNA]</scope>
    <source>
        <strain>Kyoto / Type A2</strain>
    </source>
</reference>
<accession>C1FQ94</accession>
<dbReference type="EC" id="2.7.1.21" evidence="1"/>
<dbReference type="EMBL" id="CP001581">
    <property type="protein sequence ID" value="ACO85429.1"/>
    <property type="molecule type" value="Genomic_DNA"/>
</dbReference>
<dbReference type="RefSeq" id="WP_003356155.1">
    <property type="nucleotide sequence ID" value="NC_012563.1"/>
</dbReference>
<dbReference type="SMR" id="C1FQ94"/>
<dbReference type="KEGG" id="cby:CLM_0179"/>
<dbReference type="eggNOG" id="COG1435">
    <property type="taxonomic scope" value="Bacteria"/>
</dbReference>
<dbReference type="HOGENOM" id="CLU_064400_3_0_9"/>
<dbReference type="Proteomes" id="UP000001374">
    <property type="component" value="Chromosome"/>
</dbReference>
<dbReference type="GO" id="GO:0005829">
    <property type="term" value="C:cytosol"/>
    <property type="evidence" value="ECO:0007669"/>
    <property type="project" value="TreeGrafter"/>
</dbReference>
<dbReference type="GO" id="GO:0005524">
    <property type="term" value="F:ATP binding"/>
    <property type="evidence" value="ECO:0007669"/>
    <property type="project" value="UniProtKB-UniRule"/>
</dbReference>
<dbReference type="GO" id="GO:0004797">
    <property type="term" value="F:thymidine kinase activity"/>
    <property type="evidence" value="ECO:0007669"/>
    <property type="project" value="UniProtKB-UniRule"/>
</dbReference>
<dbReference type="GO" id="GO:0008270">
    <property type="term" value="F:zinc ion binding"/>
    <property type="evidence" value="ECO:0007669"/>
    <property type="project" value="UniProtKB-UniRule"/>
</dbReference>
<dbReference type="GO" id="GO:0071897">
    <property type="term" value="P:DNA biosynthetic process"/>
    <property type="evidence" value="ECO:0007669"/>
    <property type="project" value="UniProtKB-KW"/>
</dbReference>
<dbReference type="GO" id="GO:0046104">
    <property type="term" value="P:thymidine metabolic process"/>
    <property type="evidence" value="ECO:0007669"/>
    <property type="project" value="TreeGrafter"/>
</dbReference>
<dbReference type="FunFam" id="3.30.60.20:FF:000026">
    <property type="entry name" value="Thymidine kinase"/>
    <property type="match status" value="1"/>
</dbReference>
<dbReference type="FunFam" id="3.40.50.300:FF:000384">
    <property type="entry name" value="Thymidine kinase"/>
    <property type="match status" value="1"/>
</dbReference>
<dbReference type="Gene3D" id="3.30.60.20">
    <property type="match status" value="1"/>
</dbReference>
<dbReference type="Gene3D" id="3.40.50.300">
    <property type="entry name" value="P-loop containing nucleotide triphosphate hydrolases"/>
    <property type="match status" value="1"/>
</dbReference>
<dbReference type="HAMAP" id="MF_00124">
    <property type="entry name" value="Thymidine_kinase"/>
    <property type="match status" value="1"/>
</dbReference>
<dbReference type="InterPro" id="IPR027417">
    <property type="entry name" value="P-loop_NTPase"/>
</dbReference>
<dbReference type="InterPro" id="IPR001267">
    <property type="entry name" value="Thymidine_kinase"/>
</dbReference>
<dbReference type="InterPro" id="IPR020633">
    <property type="entry name" value="Thymidine_kinase_CS"/>
</dbReference>
<dbReference type="NCBIfam" id="NF003296">
    <property type="entry name" value="PRK04296.1-1"/>
    <property type="match status" value="1"/>
</dbReference>
<dbReference type="PANTHER" id="PTHR11441">
    <property type="entry name" value="THYMIDINE KINASE"/>
    <property type="match status" value="1"/>
</dbReference>
<dbReference type="PANTHER" id="PTHR11441:SF0">
    <property type="entry name" value="THYMIDINE KINASE, CYTOSOLIC"/>
    <property type="match status" value="1"/>
</dbReference>
<dbReference type="Pfam" id="PF00265">
    <property type="entry name" value="TK"/>
    <property type="match status" value="1"/>
</dbReference>
<dbReference type="PIRSF" id="PIRSF035805">
    <property type="entry name" value="TK_cell"/>
    <property type="match status" value="1"/>
</dbReference>
<dbReference type="SUPFAM" id="SSF57716">
    <property type="entry name" value="Glucocorticoid receptor-like (DNA-binding domain)"/>
    <property type="match status" value="1"/>
</dbReference>
<dbReference type="SUPFAM" id="SSF52540">
    <property type="entry name" value="P-loop containing nucleoside triphosphate hydrolases"/>
    <property type="match status" value="1"/>
</dbReference>
<dbReference type="PROSITE" id="PS00603">
    <property type="entry name" value="TK_CELLULAR_TYPE"/>
    <property type="match status" value="1"/>
</dbReference>
<keyword id="KW-0067">ATP-binding</keyword>
<keyword id="KW-0963">Cytoplasm</keyword>
<keyword id="KW-0237">DNA synthesis</keyword>
<keyword id="KW-0418">Kinase</keyword>
<keyword id="KW-0479">Metal-binding</keyword>
<keyword id="KW-0547">Nucleotide-binding</keyword>
<keyword id="KW-0808">Transferase</keyword>
<keyword id="KW-0862">Zinc</keyword>